<organism>
    <name type="scientific">Methanosarcina acetivorans (strain ATCC 35395 / DSM 2834 / JCM 12185 / C2A)</name>
    <dbReference type="NCBI Taxonomy" id="188937"/>
    <lineage>
        <taxon>Archaea</taxon>
        <taxon>Methanobacteriati</taxon>
        <taxon>Methanobacteriota</taxon>
        <taxon>Stenosarchaea group</taxon>
        <taxon>Methanomicrobia</taxon>
        <taxon>Methanosarcinales</taxon>
        <taxon>Methanosarcinaceae</taxon>
        <taxon>Methanosarcina</taxon>
    </lineage>
</organism>
<feature type="chain" id="PRO_0000146859" description="Putative nickel insertion protein">
    <location>
        <begin position="1"/>
        <end position="396"/>
    </location>
</feature>
<accession>Q8TTK2</accession>
<gene>
    <name type="ordered locus">MA_0429</name>
</gene>
<proteinExistence type="inferred from homology"/>
<name>Y429_METAC</name>
<evidence type="ECO:0000255" key="1">
    <source>
        <dbReference type="HAMAP-Rule" id="MF_01074"/>
    </source>
</evidence>
<reference key="1">
    <citation type="journal article" date="2002" name="Genome Res.">
        <title>The genome of Methanosarcina acetivorans reveals extensive metabolic and physiological diversity.</title>
        <authorList>
            <person name="Galagan J.E."/>
            <person name="Nusbaum C."/>
            <person name="Roy A."/>
            <person name="Endrizzi M.G."/>
            <person name="Macdonald P."/>
            <person name="FitzHugh W."/>
            <person name="Calvo S."/>
            <person name="Engels R."/>
            <person name="Smirnov S."/>
            <person name="Atnoor D."/>
            <person name="Brown A."/>
            <person name="Allen N."/>
            <person name="Naylor J."/>
            <person name="Stange-Thomann N."/>
            <person name="DeArellano K."/>
            <person name="Johnson R."/>
            <person name="Linton L."/>
            <person name="McEwan P."/>
            <person name="McKernan K."/>
            <person name="Talamas J."/>
            <person name="Tirrell A."/>
            <person name="Ye W."/>
            <person name="Zimmer A."/>
            <person name="Barber R.D."/>
            <person name="Cann I."/>
            <person name="Graham D.E."/>
            <person name="Grahame D.A."/>
            <person name="Guss A.M."/>
            <person name="Hedderich R."/>
            <person name="Ingram-Smith C."/>
            <person name="Kuettner H.C."/>
            <person name="Krzycki J.A."/>
            <person name="Leigh J.A."/>
            <person name="Li W."/>
            <person name="Liu J."/>
            <person name="Mukhopadhyay B."/>
            <person name="Reeve J.N."/>
            <person name="Smith K."/>
            <person name="Springer T.A."/>
            <person name="Umayam L.A."/>
            <person name="White O."/>
            <person name="White R.H."/>
            <person name="de Macario E.C."/>
            <person name="Ferry J.G."/>
            <person name="Jarrell K.F."/>
            <person name="Jing H."/>
            <person name="Macario A.J.L."/>
            <person name="Paulsen I.T."/>
            <person name="Pritchett M."/>
            <person name="Sowers K.R."/>
            <person name="Swanson R.V."/>
            <person name="Zinder S.H."/>
            <person name="Lander E."/>
            <person name="Metcalf W.W."/>
            <person name="Birren B."/>
        </authorList>
    </citation>
    <scope>NUCLEOTIDE SEQUENCE [LARGE SCALE GENOMIC DNA]</scope>
    <source>
        <strain>ATCC 35395 / DSM 2834 / JCM 12185 / C2A</strain>
    </source>
</reference>
<protein>
    <recommendedName>
        <fullName evidence="1">Putative nickel insertion protein</fullName>
    </recommendedName>
</protein>
<comment type="similarity">
    <text evidence="1">Belongs to the LarC family.</text>
</comment>
<keyword id="KW-0533">Nickel</keyword>
<keyword id="KW-1185">Reference proteome</keyword>
<sequence length="396" mass="42467">MKTLVFNPFSGAAGDMILACALDLGADKQAVKELVEASAPVSMDIREVVKEGIKALDVRIKVPENEHVRTYPEIVDLVKAAKLPLQLEASTLSIFLKMAEAEAAVHGQPDLEMLHFHEVGQSDALADVIGSSAALHSLNCDSVYCTPINVGSGTIECAHGTLPVPAPATLEILRKGKLYFRGGSVNKELLTPTGAAILSHFAKPVETFPQGKAIAIGYGAGNADLPGPNVLQGVLLEPDSHLISDIIEVLETNADDVSGEVLGNLFEELLSMGARDVAIMPATMKKGRPAHIIKVIAKPEDSAKLARKIIVETGSLGVRVMPARHRLMAARNIERIKIELEGQEFETAVKVARDSEGVLLNISAEFEDCKKIAKASGIPVREIMRRTEEVARKLFS</sequence>
<dbReference type="EMBL" id="AE010299">
    <property type="protein sequence ID" value="AAM03876.1"/>
    <property type="molecule type" value="Genomic_DNA"/>
</dbReference>
<dbReference type="RefSeq" id="WP_011020481.1">
    <property type="nucleotide sequence ID" value="NC_003552.1"/>
</dbReference>
<dbReference type="SMR" id="Q8TTK2"/>
<dbReference type="STRING" id="188937.MA_0429"/>
<dbReference type="EnsemblBacteria" id="AAM03876">
    <property type="protein sequence ID" value="AAM03876"/>
    <property type="gene ID" value="MA_0429"/>
</dbReference>
<dbReference type="GeneID" id="1472321"/>
<dbReference type="KEGG" id="mac:MA_0429"/>
<dbReference type="HOGENOM" id="CLU_028523_2_1_2"/>
<dbReference type="InParanoid" id="Q8TTK2"/>
<dbReference type="OrthoDB" id="10691at2157"/>
<dbReference type="PhylomeDB" id="Q8TTK2"/>
<dbReference type="Proteomes" id="UP000002487">
    <property type="component" value="Chromosome"/>
</dbReference>
<dbReference type="GO" id="GO:0016829">
    <property type="term" value="F:lyase activity"/>
    <property type="evidence" value="ECO:0007669"/>
    <property type="project" value="UniProtKB-UniRule"/>
</dbReference>
<dbReference type="GO" id="GO:0016151">
    <property type="term" value="F:nickel cation binding"/>
    <property type="evidence" value="ECO:0007669"/>
    <property type="project" value="UniProtKB-UniRule"/>
</dbReference>
<dbReference type="Gene3D" id="3.10.20.300">
    <property type="entry name" value="mk0293 like domain"/>
    <property type="match status" value="1"/>
</dbReference>
<dbReference type="Gene3D" id="3.30.70.1380">
    <property type="entry name" value="Transcriptional regulatory protein pf0864 domain like"/>
    <property type="match status" value="1"/>
</dbReference>
<dbReference type="HAMAP" id="MF_01074">
    <property type="entry name" value="LarC"/>
    <property type="match status" value="1"/>
</dbReference>
<dbReference type="InterPro" id="IPR002822">
    <property type="entry name" value="Ni_insertion"/>
</dbReference>
<dbReference type="NCBIfam" id="TIGR00299">
    <property type="entry name" value="nickel pincer cofactor biosynthesis protein LarC"/>
    <property type="match status" value="1"/>
</dbReference>
<dbReference type="PANTHER" id="PTHR36566">
    <property type="entry name" value="NICKEL INSERTION PROTEIN-RELATED"/>
    <property type="match status" value="1"/>
</dbReference>
<dbReference type="PANTHER" id="PTHR36566:SF1">
    <property type="entry name" value="PYRIDINIUM-3,5-BISTHIOCARBOXYLIC ACID MONONUCLEOTIDE NICKEL INSERTION PROTEIN"/>
    <property type="match status" value="1"/>
</dbReference>
<dbReference type="Pfam" id="PF01969">
    <property type="entry name" value="Ni_insertion"/>
    <property type="match status" value="1"/>
</dbReference>